<evidence type="ECO:0000255" key="1">
    <source>
        <dbReference type="HAMAP-Rule" id="MF_00501"/>
    </source>
</evidence>
<evidence type="ECO:0000305" key="2"/>
<comment type="function">
    <text evidence="1">Binds the 23S rRNA.</text>
</comment>
<comment type="subunit">
    <text evidence="1">Part of the 50S ribosomal subunit.</text>
</comment>
<comment type="subcellular location">
    <subcellularLocation>
        <location>Plastid</location>
        <location>Chloroplast</location>
    </subcellularLocation>
</comment>
<comment type="similarity">
    <text evidence="1">Belongs to the bacterial ribosomal protein bL31 family. Type A subfamily.</text>
</comment>
<geneLocation type="chloroplast"/>
<keyword id="KW-0150">Chloroplast</keyword>
<keyword id="KW-0934">Plastid</keyword>
<keyword id="KW-0687">Ribonucleoprotein</keyword>
<keyword id="KW-0689">Ribosomal protein</keyword>
<keyword id="KW-0694">RNA-binding</keyword>
<keyword id="KW-0699">rRNA-binding</keyword>
<gene>
    <name evidence="1" type="primary">rpl31</name>
</gene>
<dbReference type="EMBL" id="Z67753">
    <property type="protein sequence ID" value="CAA91624.1"/>
    <property type="molecule type" value="Genomic_DNA"/>
</dbReference>
<dbReference type="PIR" id="S78251">
    <property type="entry name" value="S78251"/>
</dbReference>
<dbReference type="RefSeq" id="NP_043592.1">
    <property type="nucleotide sequence ID" value="NC_001713.1"/>
</dbReference>
<dbReference type="GeneID" id="801823"/>
<dbReference type="GO" id="GO:0009507">
    <property type="term" value="C:chloroplast"/>
    <property type="evidence" value="ECO:0007669"/>
    <property type="project" value="UniProtKB-SubCell"/>
</dbReference>
<dbReference type="GO" id="GO:1990904">
    <property type="term" value="C:ribonucleoprotein complex"/>
    <property type="evidence" value="ECO:0007669"/>
    <property type="project" value="UniProtKB-KW"/>
</dbReference>
<dbReference type="GO" id="GO:0005840">
    <property type="term" value="C:ribosome"/>
    <property type="evidence" value="ECO:0007669"/>
    <property type="project" value="UniProtKB-KW"/>
</dbReference>
<dbReference type="GO" id="GO:0019843">
    <property type="term" value="F:rRNA binding"/>
    <property type="evidence" value="ECO:0007669"/>
    <property type="project" value="UniProtKB-KW"/>
</dbReference>
<dbReference type="GO" id="GO:0003735">
    <property type="term" value="F:structural constituent of ribosome"/>
    <property type="evidence" value="ECO:0007669"/>
    <property type="project" value="InterPro"/>
</dbReference>
<dbReference type="GO" id="GO:0006412">
    <property type="term" value="P:translation"/>
    <property type="evidence" value="ECO:0007669"/>
    <property type="project" value="UniProtKB-UniRule"/>
</dbReference>
<dbReference type="Gene3D" id="4.10.830.30">
    <property type="entry name" value="Ribosomal protein L31"/>
    <property type="match status" value="1"/>
</dbReference>
<dbReference type="HAMAP" id="MF_00501">
    <property type="entry name" value="Ribosomal_bL31_1"/>
    <property type="match status" value="1"/>
</dbReference>
<dbReference type="InterPro" id="IPR034704">
    <property type="entry name" value="Ribosomal_bL28/bL31-like_sf"/>
</dbReference>
<dbReference type="InterPro" id="IPR002150">
    <property type="entry name" value="Ribosomal_bL31"/>
</dbReference>
<dbReference type="InterPro" id="IPR027491">
    <property type="entry name" value="Ribosomal_bL31_A"/>
</dbReference>
<dbReference type="InterPro" id="IPR042105">
    <property type="entry name" value="Ribosomal_bL31_sf"/>
</dbReference>
<dbReference type="NCBIfam" id="TIGR00105">
    <property type="entry name" value="L31"/>
    <property type="match status" value="1"/>
</dbReference>
<dbReference type="NCBIfam" id="NF001809">
    <property type="entry name" value="PRK00528.1"/>
    <property type="match status" value="1"/>
</dbReference>
<dbReference type="PANTHER" id="PTHR33280">
    <property type="entry name" value="50S RIBOSOMAL PROTEIN L31, CHLOROPLASTIC"/>
    <property type="match status" value="1"/>
</dbReference>
<dbReference type="PANTHER" id="PTHR33280:SF1">
    <property type="entry name" value="LARGE RIBOSOMAL SUBUNIT PROTEIN BL31C"/>
    <property type="match status" value="1"/>
</dbReference>
<dbReference type="Pfam" id="PF01197">
    <property type="entry name" value="Ribosomal_L31"/>
    <property type="match status" value="1"/>
</dbReference>
<dbReference type="PRINTS" id="PR01249">
    <property type="entry name" value="RIBOSOMALL31"/>
</dbReference>
<dbReference type="SUPFAM" id="SSF143800">
    <property type="entry name" value="L28p-like"/>
    <property type="match status" value="1"/>
</dbReference>
<dbReference type="PROSITE" id="PS01143">
    <property type="entry name" value="RIBOSOMAL_L31"/>
    <property type="match status" value="1"/>
</dbReference>
<name>RK31_TRICV</name>
<reference key="1">
    <citation type="journal article" date="1995" name="Plant Mol. Biol. Rep.">
        <title>The chloroplast genome of a chlorophyll a+c-containing alga, Odontella sinensis.</title>
        <authorList>
            <person name="Kowallik K.V."/>
            <person name="Stoebe B."/>
            <person name="Schaffran I."/>
            <person name="Kroth-Pancic P."/>
            <person name="Freier U."/>
        </authorList>
    </citation>
    <scope>NUCLEOTIDE SEQUENCE [LARGE SCALE GENOMIC DNA]</scope>
</reference>
<feature type="chain" id="PRO_0000173190" description="Large ribosomal subunit protein bL31c">
    <location>
        <begin position="1"/>
        <end position="72"/>
    </location>
</feature>
<proteinExistence type="inferred from homology"/>
<sequence length="72" mass="8304">MPKPEIHPTWFNETPIVCDGKPLCYIGSTKSELQVDIWLANHPFYTDSQTIIDSEGRVERFMKKYGINSTND</sequence>
<accession>P49563</accession>
<protein>
    <recommendedName>
        <fullName evidence="1">Large ribosomal subunit protein bL31c</fullName>
    </recommendedName>
    <alternativeName>
        <fullName evidence="2">50S ribosomal protein L31, chloroplastic</fullName>
    </alternativeName>
</protein>
<organism>
    <name type="scientific">Trieres chinensis</name>
    <name type="common">Marine centric diatom</name>
    <name type="synonym">Odontella sinensis</name>
    <dbReference type="NCBI Taxonomy" id="1514140"/>
    <lineage>
        <taxon>Eukaryota</taxon>
        <taxon>Sar</taxon>
        <taxon>Stramenopiles</taxon>
        <taxon>Ochrophyta</taxon>
        <taxon>Bacillariophyta</taxon>
        <taxon>Mediophyceae</taxon>
        <taxon>Biddulphiophycidae</taxon>
        <taxon>Eupodiscales</taxon>
        <taxon>Parodontellaceae</taxon>
        <taxon>Trieres</taxon>
    </lineage>
</organism>